<organism>
    <name type="scientific">Homo sapiens</name>
    <name type="common">Human</name>
    <dbReference type="NCBI Taxonomy" id="9606"/>
    <lineage>
        <taxon>Eukaryota</taxon>
        <taxon>Metazoa</taxon>
        <taxon>Chordata</taxon>
        <taxon>Craniata</taxon>
        <taxon>Vertebrata</taxon>
        <taxon>Euteleostomi</taxon>
        <taxon>Mammalia</taxon>
        <taxon>Eutheria</taxon>
        <taxon>Euarchontoglires</taxon>
        <taxon>Primates</taxon>
        <taxon>Haplorrhini</taxon>
        <taxon>Catarrhini</taxon>
        <taxon>Hominidae</taxon>
        <taxon>Homo</taxon>
    </lineage>
</organism>
<name>KRA31_HUMAN</name>
<proteinExistence type="evidence at protein level"/>
<protein>
    <recommendedName>
        <fullName>Keratin-associated protein 3-1</fullName>
    </recommendedName>
    <alternativeName>
        <fullName>High sulfur keratin-associated protein 3.1</fullName>
    </alternativeName>
    <alternativeName>
        <fullName>Keratin-associated protein 3.1</fullName>
    </alternativeName>
</protein>
<sequence>MYCCALRSCSVPTGPATTFCSFDKSCRCGVCLPSTCPHEISLLQPICCDTCPPPCCKPDTYVPTCWLLNNCHPTPGLSGINLTTYVQPGCESPCEPRC</sequence>
<evidence type="ECO:0000305" key="1"/>
<gene>
    <name type="primary">KRTAP3-1</name>
    <name type="synonym">KAP3.1</name>
    <name type="synonym">KRTAP3.1</name>
</gene>
<accession>Q9BYR8</accession>
<accession>Q14DM4</accession>
<reference key="1">
    <citation type="journal article" date="2001" name="J. Biol. Chem.">
        <title>Characterization of a cluster of human high/ultrahigh sulfur keratin-associated protein genes embedded in the type I keratin gene domain on chromosome 17q12-21.</title>
        <authorList>
            <person name="Rogers M.A."/>
            <person name="Langbein L."/>
            <person name="Winter H."/>
            <person name="Ehmann C."/>
            <person name="Praetzel S."/>
            <person name="Korn B."/>
            <person name="Schweizer J."/>
        </authorList>
    </citation>
    <scope>NUCLEOTIDE SEQUENCE [MRNA]</scope>
    <source>
        <tissue>Scalp</tissue>
    </source>
</reference>
<reference key="2">
    <citation type="journal article" date="2004" name="Genome Res.">
        <title>The status, quality, and expansion of the NIH full-length cDNA project: the Mammalian Gene Collection (MGC).</title>
        <authorList>
            <consortium name="The MGC Project Team"/>
        </authorList>
    </citation>
    <scope>NUCLEOTIDE SEQUENCE [LARGE SCALE MRNA]</scope>
</reference>
<comment type="function">
    <text>In the hair cortex, hair keratin intermediate filaments are embedded in an interfilamentous matrix, consisting of hair keratin-associated proteins (KRTAP), which are essential for the formation of a rigid and resistant hair shaft through their extensive disulfide bond cross-linking with abundant cysteine residues of hair keratins. The matrix proteins include the high-sulfur and high-glycine-tyrosine keratins.</text>
</comment>
<comment type="subunit">
    <text>Interacts with hair keratins.</text>
</comment>
<comment type="interaction">
    <interactant intactId="EBI-9996449">
        <id>Q9BYR8</id>
    </interactant>
    <interactant intactId="EBI-12006944">
        <id>O43184-4</id>
        <label>ADAM12</label>
    </interactant>
    <organismsDiffer>false</organismsDiffer>
    <experiments>5</experiments>
</comment>
<comment type="interaction">
    <interactant intactId="EBI-9996449">
        <id>Q9BYR8</id>
    </interactant>
    <interactant intactId="EBI-727098">
        <id>P21549</id>
        <label>AGXT</label>
    </interactant>
    <organismsDiffer>false</organismsDiffer>
    <experiments>3</experiments>
</comment>
<comment type="interaction">
    <interactant intactId="EBI-9996449">
        <id>Q9BYR8</id>
    </interactant>
    <interactant intactId="EBI-12224467">
        <id>Q9NYG5-2</id>
        <label>ANAPC11</label>
    </interactant>
    <organismsDiffer>false</organismsDiffer>
    <experiments>3</experiments>
</comment>
<comment type="interaction">
    <interactant intactId="EBI-9996449">
        <id>Q9BYR8</id>
    </interactant>
    <interactant intactId="EBI-1035195">
        <id>P18075</id>
        <label>BMP7</label>
    </interactant>
    <organismsDiffer>false</organismsDiffer>
    <experiments>3</experiments>
</comment>
<comment type="interaction">
    <interactant intactId="EBI-9996449">
        <id>Q9BYR8</id>
    </interactant>
    <interactant intactId="EBI-375077">
        <id>P38936</id>
        <label>CDKN1A</label>
    </interactant>
    <organismsDiffer>false</organismsDiffer>
    <experiments>3</experiments>
</comment>
<comment type="interaction">
    <interactant intactId="EBI-9996449">
        <id>Q9BYR8</id>
    </interactant>
    <interactant intactId="EBI-11478642">
        <id>P08218</id>
        <label>CELA2B</label>
    </interactant>
    <organismsDiffer>false</organismsDiffer>
    <experiments>3</experiments>
</comment>
<comment type="interaction">
    <interactant intactId="EBI-9996449">
        <id>Q9BYR8</id>
    </interactant>
    <interactant intactId="EBI-10274247">
        <id>Q8TCT0</id>
        <label>CERK</label>
    </interactant>
    <organismsDiffer>false</organismsDiffer>
    <experiments>3</experiments>
</comment>
<comment type="interaction">
    <interactant intactId="EBI-9996449">
        <id>Q9BYR8</id>
    </interactant>
    <interactant intactId="EBI-9038570">
        <id>P27918</id>
        <label>CFP</label>
    </interactant>
    <organismsDiffer>false</organismsDiffer>
    <experiments>3</experiments>
</comment>
<comment type="interaction">
    <interactant intactId="EBI-9996449">
        <id>Q9BYR8</id>
    </interactant>
    <interactant intactId="EBI-12155483">
        <id>Q9H1P6</id>
        <label>CIMIP1</label>
    </interactant>
    <organismsDiffer>false</organismsDiffer>
    <experiments>3</experiments>
</comment>
<comment type="interaction">
    <interactant intactId="EBI-9996449">
        <id>Q9BYR8</id>
    </interactant>
    <interactant intactId="EBI-741032">
        <id>Q8NE01</id>
        <label>CNNM3</label>
    </interactant>
    <organismsDiffer>false</organismsDiffer>
    <experiments>3</experiments>
</comment>
<comment type="interaction">
    <interactant intactId="EBI-9996449">
        <id>Q9BYR8</id>
    </interactant>
    <interactant intactId="EBI-10192698">
        <id>Q02930-3</id>
        <label>CREB5</label>
    </interactant>
    <organismsDiffer>false</organismsDiffer>
    <experiments>3</experiments>
</comment>
<comment type="interaction">
    <interactant intactId="EBI-9996449">
        <id>Q9BYR8</id>
    </interactant>
    <interactant intactId="EBI-10295404">
        <id>Q99895</id>
        <label>CTRC</label>
    </interactant>
    <organismsDiffer>false</organismsDiffer>
    <experiments>3</experiments>
</comment>
<comment type="interaction">
    <interactant intactId="EBI-9996449">
        <id>Q9BYR8</id>
    </interactant>
    <interactant intactId="EBI-3867333">
        <id>A8MQ03</id>
        <label>CYSRT1</label>
    </interactant>
    <organismsDiffer>false</organismsDiffer>
    <experiments>3</experiments>
</comment>
<comment type="interaction">
    <interactant intactId="EBI-9996449">
        <id>Q9BYR8</id>
    </interactant>
    <interactant intactId="EBI-9679045">
        <id>Q9NQL9</id>
        <label>DMRT3</label>
    </interactant>
    <organismsDiffer>false</organismsDiffer>
    <experiments>5</experiments>
</comment>
<comment type="interaction">
    <interactant intactId="EBI-9996449">
        <id>Q9BYR8</id>
    </interactant>
    <interactant intactId="EBI-448771">
        <id>Q92608</id>
        <label>DOCK2</label>
    </interactant>
    <organismsDiffer>false</organismsDiffer>
    <experiments>3</experiments>
</comment>
<comment type="interaction">
    <interactant intactId="EBI-9996449">
        <id>Q9BYR8</id>
    </interactant>
    <interactant intactId="EBI-11978259">
        <id>Q92567-2</id>
        <label>FAM168A</label>
    </interactant>
    <organismsDiffer>false</organismsDiffer>
    <experiments>3</experiments>
</comment>
<comment type="interaction">
    <interactant intactId="EBI-9996449">
        <id>Q9BYR8</id>
    </interactant>
    <interactant intactId="EBI-2807642">
        <id>Q8WU58</id>
        <label>FAM222B</label>
    </interactant>
    <organismsDiffer>false</organismsDiffer>
    <experiments>3</experiments>
</comment>
<comment type="interaction">
    <interactant intactId="EBI-9996449">
        <id>Q9BYR8</id>
    </interactant>
    <interactant intactId="EBI-1759806">
        <id>O75593</id>
        <label>FOXH1</label>
    </interactant>
    <organismsDiffer>false</organismsDiffer>
    <experiments>3</experiments>
</comment>
<comment type="interaction">
    <interactant intactId="EBI-9996449">
        <id>Q9BYR8</id>
    </interactant>
    <interactant intactId="EBI-725515">
        <id>O43559</id>
        <label>FRS3</label>
    </interactant>
    <organismsDiffer>false</organismsDiffer>
    <experiments>3</experiments>
</comment>
<comment type="interaction">
    <interactant intactId="EBI-9996449">
        <id>Q9BYR8</id>
    </interactant>
    <interactant intactId="EBI-2806671">
        <id>P23769</id>
        <label>GATA2</label>
    </interactant>
    <organismsDiffer>false</organismsDiffer>
    <experiments>3</experiments>
</comment>
<comment type="interaction">
    <interactant intactId="EBI-9996449">
        <id>Q9BYR8</id>
    </interactant>
    <interactant intactId="EBI-11975289">
        <id>Q9Y223-2</id>
        <label>GNE</label>
    </interactant>
    <organismsDiffer>false</organismsDiffer>
    <experiments>3</experiments>
</comment>
<comment type="interaction">
    <interactant intactId="EBI-9996449">
        <id>Q9BYR8</id>
    </interactant>
    <interactant intactId="EBI-713355">
        <id>Q13227</id>
        <label>GPS2</label>
    </interactant>
    <organismsDiffer>false</organismsDiffer>
    <experiments>3</experiments>
</comment>
<comment type="interaction">
    <interactant intactId="EBI-9996449">
        <id>Q9BYR8</id>
    </interactant>
    <interactant intactId="EBI-353467">
        <id>P09211</id>
        <label>GSTP1</label>
    </interactant>
    <organismsDiffer>false</organismsDiffer>
    <experiments>3</experiments>
</comment>
<comment type="interaction">
    <interactant intactId="EBI-9996449">
        <id>Q9BYR8</id>
    </interactant>
    <interactant intactId="EBI-9834454">
        <id>P08631-2</id>
        <label>HCK</label>
    </interactant>
    <organismsDiffer>false</organismsDiffer>
    <experiments>3</experiments>
</comment>
<comment type="interaction">
    <interactant intactId="EBI-9996449">
        <id>Q9BYR8</id>
    </interactant>
    <interactant intactId="EBI-750630">
        <id>Q9UBP5</id>
        <label>HEY2</label>
    </interactant>
    <organismsDiffer>false</organismsDiffer>
    <experiments>3</experiments>
</comment>
<comment type="interaction">
    <interactant intactId="EBI-9996449">
        <id>Q9BYR8</id>
    </interactant>
    <interactant intactId="EBI-8561769">
        <id>Q5SUL5</id>
        <label>HLA-A</label>
    </interactant>
    <organismsDiffer>false</organismsDiffer>
    <experiments>3</experiments>
</comment>
<comment type="interaction">
    <interactant intactId="EBI-9996449">
        <id>Q9BYR8</id>
    </interactant>
    <interactant intactId="EBI-745290">
        <id>P17482</id>
        <label>HOXB9</label>
    </interactant>
    <organismsDiffer>false</organismsDiffer>
    <experiments>3</experiments>
</comment>
<comment type="interaction">
    <interactant intactId="EBI-9996449">
        <id>Q9BYR8</id>
    </interactant>
    <interactant intactId="EBI-2880706">
        <id>O43593</id>
        <label>HR</label>
    </interactant>
    <organismsDiffer>false</organismsDiffer>
    <experiments>3</experiments>
</comment>
<comment type="interaction">
    <interactant intactId="EBI-9996449">
        <id>Q9BYR8</id>
    </interactant>
    <interactant intactId="EBI-12056251">
        <id>Q9ULV5-2</id>
        <label>HSF4</label>
    </interactant>
    <organismsDiffer>false</organismsDiffer>
    <experiments>3</experiments>
</comment>
<comment type="interaction">
    <interactant intactId="EBI-9996449">
        <id>Q9BYR8</id>
    </interactant>
    <interactant intactId="EBI-17178971">
        <id>Q14005-2</id>
        <label>IL16</label>
    </interactant>
    <organismsDiffer>false</organismsDiffer>
    <experiments>3</experiments>
</comment>
<comment type="interaction">
    <interactant intactId="EBI-9996449">
        <id>Q9BYR8</id>
    </interactant>
    <interactant intactId="EBI-11051601">
        <id>P16144-2</id>
        <label>ITGB4</label>
    </interactant>
    <organismsDiffer>false</organismsDiffer>
    <experiments>3</experiments>
</comment>
<comment type="interaction">
    <interactant intactId="EBI-9996449">
        <id>Q9BYR8</id>
    </interactant>
    <interactant intactId="EBI-399080">
        <id>Q92993</id>
        <label>KAT5</label>
    </interactant>
    <organismsDiffer>false</organismsDiffer>
    <experiments>3</experiments>
</comment>
<comment type="interaction">
    <interactant intactId="EBI-9996449">
        <id>Q9BYR8</id>
    </interactant>
    <interactant intactId="EBI-10171774">
        <id>P60410</id>
        <label>KRTAP10-8</label>
    </interactant>
    <organismsDiffer>false</organismsDiffer>
    <experiments>3</experiments>
</comment>
<comment type="interaction">
    <interactant intactId="EBI-9996449">
        <id>Q9BYR8</id>
    </interactant>
    <interactant intactId="EBI-11953846">
        <id>Q52LG2</id>
        <label>KRTAP13-2</label>
    </interactant>
    <organismsDiffer>false</organismsDiffer>
    <experiments>3</experiments>
</comment>
<comment type="interaction">
    <interactant intactId="EBI-9996449">
        <id>Q9BYR8</id>
    </interactant>
    <interactant intactId="EBI-10241252">
        <id>Q3SY46</id>
        <label>KRTAP13-3</label>
    </interactant>
    <organismsDiffer>false</organismsDiffer>
    <experiments>3</experiments>
</comment>
<comment type="interaction">
    <interactant intactId="EBI-9996449">
        <id>Q9BYR8</id>
    </interactant>
    <interactant intactId="EBI-11992140">
        <id>Q3LI76</id>
        <label>KRTAP15-1</label>
    </interactant>
    <organismsDiffer>false</organismsDiffer>
    <experiments>3</experiments>
</comment>
<comment type="interaction">
    <interactant intactId="EBI-9996449">
        <id>Q9BYR8</id>
    </interactant>
    <interactant intactId="EBI-3957672">
        <id>Q6PEX3</id>
        <label>KRTAP26-1</label>
    </interactant>
    <organismsDiffer>false</organismsDiffer>
    <experiments>3</experiments>
</comment>
<comment type="interaction">
    <interactant intactId="EBI-9996449">
        <id>Q9BYR8</id>
    </interactant>
    <interactant intactId="EBI-10302392">
        <id>Q9BYQ6</id>
        <label>KRTAP4-11</label>
    </interactant>
    <organismsDiffer>false</organismsDiffer>
    <experiments>3</experiments>
</comment>
<comment type="interaction">
    <interactant intactId="EBI-9996449">
        <id>Q9BYR8</id>
    </interactant>
    <interactant intactId="EBI-739863">
        <id>Q9BQ66</id>
        <label>KRTAP4-12</label>
    </interactant>
    <organismsDiffer>false</organismsDiffer>
    <experiments>3</experiments>
</comment>
<comment type="interaction">
    <interactant intactId="EBI-9996449">
        <id>Q9BYR8</id>
    </interactant>
    <interactant intactId="EBI-12111050">
        <id>Q3LI64</id>
        <label>KRTAP6-1</label>
    </interactant>
    <organismsDiffer>false</organismsDiffer>
    <experiments>3</experiments>
</comment>
<comment type="interaction">
    <interactant intactId="EBI-9996449">
        <id>Q9BYR8</id>
    </interactant>
    <interactant intactId="EBI-1043191">
        <id>Q9BYQ3</id>
        <label>KRTAP9-3</label>
    </interactant>
    <organismsDiffer>false</organismsDiffer>
    <experiments>3</experiments>
</comment>
<comment type="interaction">
    <interactant intactId="EBI-9996449">
        <id>Q9BYR8</id>
    </interactant>
    <interactant intactId="EBI-11958364">
        <id>Q9BYQ0</id>
        <label>KRTAP9-8</label>
    </interactant>
    <organismsDiffer>false</organismsDiffer>
    <experiments>3</experiments>
</comment>
<comment type="interaction">
    <interactant intactId="EBI-9996449">
        <id>Q9BYR8</id>
    </interactant>
    <interactant intactId="EBI-10245913">
        <id>Q5T7P3</id>
        <label>LCE1B</label>
    </interactant>
    <organismsDiffer>false</organismsDiffer>
    <experiments>3</experiments>
</comment>
<comment type="interaction">
    <interactant intactId="EBI-9996449">
        <id>Q9BYR8</id>
    </interactant>
    <interactant intactId="EBI-11478468">
        <id>O14633</id>
        <label>LCE2B</label>
    </interactant>
    <organismsDiffer>false</organismsDiffer>
    <experiments>3</experiments>
</comment>
<comment type="interaction">
    <interactant intactId="EBI-9996449">
        <id>Q9BYR8</id>
    </interactant>
    <interactant intactId="EBI-9394625">
        <id>Q5TA76</id>
        <label>LCE3A</label>
    </interactant>
    <organismsDiffer>false</organismsDiffer>
    <experiments>3</experiments>
</comment>
<comment type="interaction">
    <interactant intactId="EBI-9996449">
        <id>Q9BYR8</id>
    </interactant>
    <interactant intactId="EBI-6658837">
        <id>Q9BYE3</id>
        <label>LCE3D</label>
    </interactant>
    <organismsDiffer>false</organismsDiffer>
    <experiments>3</experiments>
</comment>
<comment type="interaction">
    <interactant intactId="EBI-9996449">
        <id>Q9BYR8</id>
    </interactant>
    <interactant intactId="EBI-10246358">
        <id>Q5TA78</id>
        <label>LCE4A</label>
    </interactant>
    <organismsDiffer>false</organismsDiffer>
    <experiments>3</experiments>
</comment>
<comment type="interaction">
    <interactant intactId="EBI-9996449">
        <id>Q9BYR8</id>
    </interactant>
    <interactant intactId="EBI-11955689">
        <id>Q5TCM9</id>
        <label>LCE5A</label>
    </interactant>
    <organismsDiffer>false</organismsDiffer>
    <experiments>3</experiments>
</comment>
<comment type="interaction">
    <interactant intactId="EBI-9996449">
        <id>Q9BYR8</id>
    </interactant>
    <interactant intactId="EBI-11742507">
        <id>Q8TAP4-4</id>
        <label>LMO3</label>
    </interactant>
    <organismsDiffer>false</organismsDiffer>
    <experiments>3</experiments>
</comment>
<comment type="interaction">
    <interactant intactId="EBI-9996449">
        <id>Q9BYR8</id>
    </interactant>
    <interactant intactId="EBI-2798728">
        <id>P61968</id>
        <label>LMO4</label>
    </interactant>
    <organismsDiffer>false</organismsDiffer>
    <experiments>3</experiments>
</comment>
<comment type="interaction">
    <interactant intactId="EBI-9996449">
        <id>Q9BYR8</id>
    </interactant>
    <interactant intactId="EBI-721408">
        <id>Q15345</id>
        <label>LRRC41</label>
    </interactant>
    <organismsDiffer>false</organismsDiffer>
    <experiments>3</experiments>
</comment>
<comment type="interaction">
    <interactant intactId="EBI-9996449">
        <id>Q9BYR8</id>
    </interactant>
    <interactant intactId="EBI-947402">
        <id>O60336</id>
        <label>MAPKBP1</label>
    </interactant>
    <organismsDiffer>false</organismsDiffer>
    <experiments>3</experiments>
</comment>
<comment type="interaction">
    <interactant intactId="EBI-9996449">
        <id>Q9BYR8</id>
    </interactant>
    <interactant intactId="EBI-1053902">
        <id>Q9NQ50</id>
        <label>MRPL40</label>
    </interactant>
    <organismsDiffer>false</organismsDiffer>
    <experiments>3</experiments>
</comment>
<comment type="interaction">
    <interactant intactId="EBI-9996449">
        <id>Q9BYR8</id>
    </interactant>
    <interactant intactId="EBI-2858213">
        <id>Q86VE0</id>
        <label>MYPOP</label>
    </interactant>
    <organismsDiffer>false</organismsDiffer>
    <experiments>3</experiments>
</comment>
<comment type="interaction">
    <interactant intactId="EBI-9996449">
        <id>Q9BYR8</id>
    </interactant>
    <interactant intactId="EBI-945833">
        <id>Q7Z3S9</id>
        <label>NOTCH2NLA</label>
    </interactant>
    <organismsDiffer>false</organismsDiffer>
    <experiments>3</experiments>
</comment>
<comment type="interaction">
    <interactant intactId="EBI-9996449">
        <id>Q9BYR8</id>
    </interactant>
    <interactant intactId="EBI-741158">
        <id>Q96HA8</id>
        <label>NTAQ1</label>
    </interactant>
    <organismsDiffer>false</organismsDiffer>
    <experiments>3</experiments>
</comment>
<comment type="interaction">
    <interactant intactId="EBI-9996449">
        <id>Q9BYR8</id>
    </interactant>
    <interactant intactId="EBI-740446">
        <id>P32242</id>
        <label>OTX1</label>
    </interactant>
    <organismsDiffer>false</organismsDiffer>
    <experiments>3</experiments>
</comment>
<comment type="interaction">
    <interactant intactId="EBI-9996449">
        <id>Q9BYR8</id>
    </interactant>
    <interactant intactId="EBI-11022007">
        <id>Q9HBE1-4</id>
        <label>PATZ1</label>
    </interactant>
    <organismsDiffer>false</organismsDiffer>
    <experiments>3</experiments>
</comment>
<comment type="interaction">
    <interactant intactId="EBI-9996449">
        <id>Q9BYR8</id>
    </interactant>
    <interactant intactId="EBI-11956269">
        <id>Q92824-2</id>
        <label>PCSK5</label>
    </interactant>
    <organismsDiffer>false</organismsDiffer>
    <experiments>3</experiments>
</comment>
<comment type="interaction">
    <interactant intactId="EBI-9996449">
        <id>Q9BYR8</id>
    </interactant>
    <interactant intactId="EBI-14084211">
        <id>A2BDE7</id>
        <label>PHLDA1</label>
    </interactant>
    <organismsDiffer>false</organismsDiffer>
    <experiments>3</experiments>
</comment>
<comment type="interaction">
    <interactant intactId="EBI-9996449">
        <id>Q9BYR8</id>
    </interactant>
    <interactant intactId="EBI-12886396">
        <id>Q9C010-2</id>
        <label>PKIB</label>
    </interactant>
    <organismsDiffer>false</organismsDiffer>
    <experiments>3</experiments>
</comment>
<comment type="interaction">
    <interactant intactId="EBI-9996449">
        <id>Q9BYR8</id>
    </interactant>
    <interactant intactId="EBI-769257">
        <id>Q9NRQ2</id>
        <label>PLSCR4</label>
    </interactant>
    <organismsDiffer>false</organismsDiffer>
    <experiments>3</experiments>
</comment>
<comment type="interaction">
    <interactant intactId="EBI-9996449">
        <id>Q9BYR8</id>
    </interactant>
    <interactant intactId="EBI-1055079">
        <id>O15160</id>
        <label>POLR1C</label>
    </interactant>
    <organismsDiffer>false</organismsDiffer>
    <experiments>3</experiments>
</comment>
<comment type="interaction">
    <interactant intactId="EBI-9996449">
        <id>Q9BYR8</id>
    </interactant>
    <interactant intactId="EBI-1383528">
        <id>P17252</id>
        <label>PRKCA</label>
    </interactant>
    <organismsDiffer>false</organismsDiffer>
    <experiments>3</experiments>
</comment>
<comment type="interaction">
    <interactant intactId="EBI-9996449">
        <id>Q9BYR8</id>
    </interactant>
    <interactant intactId="EBI-7199479">
        <id>Q8WUK0</id>
        <label>PTPMT1</label>
    </interactant>
    <organismsDiffer>false</organismsDiffer>
    <experiments>3</experiments>
</comment>
<comment type="interaction">
    <interactant intactId="EBI-9996449">
        <id>Q9BYR8</id>
    </interactant>
    <interactant intactId="EBI-3919694">
        <id>P15151</id>
        <label>PVR</label>
    </interactant>
    <organismsDiffer>false</organismsDiffer>
    <experiments>3</experiments>
</comment>
<comment type="interaction">
    <interactant intactId="EBI-9996449">
        <id>Q9BYR8</id>
    </interactant>
    <interactant intactId="EBI-740343">
        <id>Q93062-3</id>
        <label>RBPMS</label>
    </interactant>
    <organismsDiffer>false</organismsDiffer>
    <experiments>3</experiments>
</comment>
<comment type="interaction">
    <interactant intactId="EBI-9996449">
        <id>Q9BYR8</id>
    </interactant>
    <interactant intactId="EBI-10253121">
        <id>Q6P9E2</id>
        <label>RECK</label>
    </interactant>
    <organismsDiffer>false</organismsDiffer>
    <experiments>3</experiments>
</comment>
<comment type="interaction">
    <interactant intactId="EBI-9996449">
        <id>Q9BYR8</id>
    </interactant>
    <interactant intactId="EBI-14065960">
        <id>Q96HR9-2</id>
        <label>REEP6</label>
    </interactant>
    <organismsDiffer>false</organismsDiffer>
    <experiments>3</experiments>
</comment>
<comment type="interaction">
    <interactant intactId="EBI-9996449">
        <id>Q9BYR8</id>
    </interactant>
    <interactant intactId="EBI-2845060">
        <id>Q7L0R7</id>
        <label>RNF44</label>
    </interactant>
    <organismsDiffer>false</organismsDiffer>
    <experiments>3</experiments>
</comment>
<comment type="interaction">
    <interactant intactId="EBI-9996449">
        <id>Q9BYR8</id>
    </interactant>
    <interactant intactId="EBI-12148649">
        <id>Q7Z3H4</id>
        <label>SAMD7</label>
    </interactant>
    <organismsDiffer>false</organismsDiffer>
    <experiments>3</experiments>
</comment>
<comment type="interaction">
    <interactant intactId="EBI-9996449">
        <id>Q9BYR8</id>
    </interactant>
    <interactant intactId="EBI-12000762">
        <id>Q7Z5V6-2</id>
        <label>SAXO4</label>
    </interactant>
    <organismsDiffer>false</organismsDiffer>
    <experiments>3</experiments>
</comment>
<comment type="interaction">
    <interactant intactId="EBI-9996449">
        <id>Q9BYR8</id>
    </interactant>
    <interactant intactId="EBI-9090795">
        <id>Q15047-2</id>
        <label>SETDB1</label>
    </interactant>
    <organismsDiffer>false</organismsDiffer>
    <experiments>3</experiments>
</comment>
<comment type="interaction">
    <interactant intactId="EBI-9996449">
        <id>Q9BYR8</id>
    </interactant>
    <interactant intactId="EBI-355653">
        <id>Q92922</id>
        <label>SMARCC1</label>
    </interactant>
    <organismsDiffer>false</organismsDiffer>
    <experiments>3</experiments>
</comment>
<comment type="interaction">
    <interactant intactId="EBI-9996449">
        <id>Q9BYR8</id>
    </interactant>
    <interactant intactId="EBI-11959123">
        <id>Q99932-2</id>
        <label>SPAG8</label>
    </interactant>
    <organismsDiffer>false</organismsDiffer>
    <experiments>3</experiments>
</comment>
<comment type="interaction">
    <interactant intactId="EBI-9996449">
        <id>Q9BYR8</id>
    </interactant>
    <interactant intactId="EBI-743976">
        <id>Q96LM6</id>
        <label>SPMIP9</label>
    </interactant>
    <organismsDiffer>false</organismsDiffer>
    <experiments>3</experiments>
</comment>
<comment type="interaction">
    <interactant intactId="EBI-9996449">
        <id>Q9BYR8</id>
    </interactant>
    <interactant intactId="EBI-8644516">
        <id>Q9BXF9</id>
        <label>TEKT3</label>
    </interactant>
    <organismsDiffer>false</organismsDiffer>
    <experiments>3</experiments>
</comment>
<comment type="interaction">
    <interactant intactId="EBI-9996449">
        <id>Q9BYR8</id>
    </interactant>
    <interactant intactId="EBI-3939165">
        <id>O43711</id>
        <label>TLX3</label>
    </interactant>
    <organismsDiffer>false</organismsDiffer>
    <experiments>3</experiments>
</comment>
<comment type="interaction">
    <interactant intactId="EBI-9996449">
        <id>Q9BYR8</id>
    </interactant>
    <interactant intactId="EBI-10249550">
        <id>Q6EMK4</id>
        <label>VASN</label>
    </interactant>
    <organismsDiffer>false</organismsDiffer>
    <experiments>5</experiments>
</comment>
<comment type="interaction">
    <interactant intactId="EBI-9996449">
        <id>Q9BYR8</id>
    </interactant>
    <interactant intactId="EBI-10191303">
        <id>O95231</id>
        <label>VENTX</label>
    </interactant>
    <organismsDiffer>false</organismsDiffer>
    <experiments>3</experiments>
</comment>
<comment type="interaction">
    <interactant intactId="EBI-9996449">
        <id>Q9BYR8</id>
    </interactant>
    <interactant intactId="EBI-11957216">
        <id>A8MV65-2</id>
        <label>VGLL3</label>
    </interactant>
    <organismsDiffer>false</organismsDiffer>
    <experiments>3</experiments>
</comment>
<comment type="interaction">
    <interactant intactId="EBI-9996449">
        <id>Q9BYR8</id>
    </interactant>
    <interactant intactId="EBI-12032042">
        <id>Q64LD2-2</id>
        <label>WDR25</label>
    </interactant>
    <organismsDiffer>false</organismsDiffer>
    <experiments>3</experiments>
</comment>
<comment type="interaction">
    <interactant intactId="EBI-9996449">
        <id>Q9BYR8</id>
    </interactant>
    <interactant intactId="EBI-359832">
        <id>P61981</id>
        <label>YWHAG</label>
    </interactant>
    <organismsDiffer>false</organismsDiffer>
    <experiments>3</experiments>
</comment>
<comment type="interaction">
    <interactant intactId="EBI-9996449">
        <id>Q9BYR8</id>
    </interactant>
    <interactant intactId="EBI-11994144">
        <id>A2RRC6</id>
        <label>ZFHX2</label>
    </interactant>
    <organismsDiffer>false</organismsDiffer>
    <experiments>3</experiments>
</comment>
<comment type="interaction">
    <interactant intactId="EBI-9996449">
        <id>Q9BYR8</id>
    </interactant>
    <interactant intactId="EBI-744257">
        <id>Q96IQ9</id>
        <label>ZNF414</label>
    </interactant>
    <organismsDiffer>false</organismsDiffer>
    <experiments>3</experiments>
</comment>
<comment type="interaction">
    <interactant intactId="EBI-9996449">
        <id>Q9BYR8</id>
    </interactant>
    <interactant intactId="EBI-740232">
        <id>Q9NWS9-2</id>
        <label>ZNF446</label>
    </interactant>
    <organismsDiffer>false</organismsDiffer>
    <experiments>3</experiments>
</comment>
<comment type="similarity">
    <text evidence="1">Belongs to the KRTAP type 3 family.</text>
</comment>
<keyword id="KW-0416">Keratin</keyword>
<keyword id="KW-1267">Proteomics identification</keyword>
<keyword id="KW-1185">Reference proteome</keyword>
<keyword id="KW-0677">Repeat</keyword>
<dbReference type="EMBL" id="AJ406931">
    <property type="protein sequence ID" value="CAC27570.1"/>
    <property type="molecule type" value="mRNA"/>
</dbReference>
<dbReference type="EMBL" id="BC113077">
    <property type="protein sequence ID" value="AAI13078.1"/>
    <property type="molecule type" value="mRNA"/>
</dbReference>
<dbReference type="EMBL" id="BC113078">
    <property type="protein sequence ID" value="AAI13079.1"/>
    <property type="molecule type" value="mRNA"/>
</dbReference>
<dbReference type="CCDS" id="CCDS32645.1"/>
<dbReference type="RefSeq" id="NP_114164.1">
    <property type="nucleotide sequence ID" value="NM_031958.2"/>
</dbReference>
<dbReference type="BioGRID" id="123807">
    <property type="interactions" value="84"/>
</dbReference>
<dbReference type="FunCoup" id="Q9BYR8">
    <property type="interactions" value="146"/>
</dbReference>
<dbReference type="IntAct" id="Q9BYR8">
    <property type="interactions" value="88"/>
</dbReference>
<dbReference type="STRING" id="9606.ENSP00000375430"/>
<dbReference type="GlyGen" id="Q9BYR8">
    <property type="glycosylation" value="1 site"/>
</dbReference>
<dbReference type="SwissPalm" id="Q9BYR8"/>
<dbReference type="BioMuta" id="KRTAP3-1"/>
<dbReference type="DMDM" id="38372629"/>
<dbReference type="MassIVE" id="Q9BYR8"/>
<dbReference type="PaxDb" id="9606-ENSP00000375430"/>
<dbReference type="PeptideAtlas" id="Q9BYR8"/>
<dbReference type="ProteomicsDB" id="79697"/>
<dbReference type="Antibodypedia" id="76771">
    <property type="antibodies" value="24 antibodies from 4 providers"/>
</dbReference>
<dbReference type="DNASU" id="83896"/>
<dbReference type="Ensembl" id="ENST00000391588.3">
    <property type="protein sequence ID" value="ENSP00000375430.1"/>
    <property type="gene ID" value="ENSG00000212901.4"/>
</dbReference>
<dbReference type="Ensembl" id="ENST00000571440.2">
    <property type="protein sequence ID" value="ENSP00000459883.1"/>
    <property type="gene ID" value="ENSG00000262068.3"/>
</dbReference>
<dbReference type="GeneID" id="83896"/>
<dbReference type="KEGG" id="hsa:83896"/>
<dbReference type="MANE-Select" id="ENST00000391588.3">
    <property type="protein sequence ID" value="ENSP00000375430.1"/>
    <property type="RefSeq nucleotide sequence ID" value="NM_031958.2"/>
    <property type="RefSeq protein sequence ID" value="NP_114164.1"/>
</dbReference>
<dbReference type="UCSC" id="uc002hvt.2">
    <property type="organism name" value="human"/>
</dbReference>
<dbReference type="AGR" id="HGNC:16778"/>
<dbReference type="CTD" id="83896"/>
<dbReference type="GeneCards" id="KRTAP3-1"/>
<dbReference type="HGNC" id="HGNC:16778">
    <property type="gene designation" value="KRTAP3-1"/>
</dbReference>
<dbReference type="HPA" id="ENSG00000212901">
    <property type="expression patterns" value="Tissue enriched (skin)"/>
</dbReference>
<dbReference type="neXtProt" id="NX_Q9BYR8"/>
<dbReference type="OpenTargets" id="ENSG00000212901"/>
<dbReference type="PharmGKB" id="PA38418"/>
<dbReference type="VEuPathDB" id="HostDB:ENSG00000212901"/>
<dbReference type="eggNOG" id="KOG4726">
    <property type="taxonomic scope" value="Eukaryota"/>
</dbReference>
<dbReference type="GeneTree" id="ENSGT00390000001157"/>
<dbReference type="HOGENOM" id="CLU_2359185_0_0_1"/>
<dbReference type="InParanoid" id="Q9BYR8"/>
<dbReference type="OMA" id="NPCEPCC"/>
<dbReference type="OrthoDB" id="9446518at2759"/>
<dbReference type="PAN-GO" id="Q9BYR8">
    <property type="GO annotations" value="0 GO annotations based on evolutionary models"/>
</dbReference>
<dbReference type="PhylomeDB" id="Q9BYR8"/>
<dbReference type="TreeFam" id="TF338042"/>
<dbReference type="PathwayCommons" id="Q9BYR8"/>
<dbReference type="Reactome" id="R-HSA-6805567">
    <property type="pathway name" value="Keratinization"/>
</dbReference>
<dbReference type="SignaLink" id="Q9BYR8"/>
<dbReference type="BioGRID-ORCS" id="83896">
    <property type="hits" value="10 hits in 1138 CRISPR screens"/>
</dbReference>
<dbReference type="GenomeRNAi" id="83896"/>
<dbReference type="Pharos" id="Q9BYR8">
    <property type="development level" value="Tdark"/>
</dbReference>
<dbReference type="PRO" id="PR:Q9BYR8"/>
<dbReference type="Proteomes" id="UP000005640">
    <property type="component" value="Chromosome 17"/>
</dbReference>
<dbReference type="RNAct" id="Q9BYR8">
    <property type="molecule type" value="protein"/>
</dbReference>
<dbReference type="Bgee" id="ENSG00000212901">
    <property type="expression patterns" value="Expressed in skin of abdomen and 61 other cell types or tissues"/>
</dbReference>
<dbReference type="GO" id="GO:0005829">
    <property type="term" value="C:cytosol"/>
    <property type="evidence" value="ECO:0000304"/>
    <property type="project" value="Reactome"/>
</dbReference>
<dbReference type="GO" id="GO:0045095">
    <property type="term" value="C:keratin filament"/>
    <property type="evidence" value="ECO:0007669"/>
    <property type="project" value="InterPro"/>
</dbReference>
<dbReference type="GO" id="GO:0005198">
    <property type="term" value="F:structural molecule activity"/>
    <property type="evidence" value="ECO:0007669"/>
    <property type="project" value="InterPro"/>
</dbReference>
<dbReference type="InterPro" id="IPR007659">
    <property type="entry name" value="Keratin_matx"/>
</dbReference>
<dbReference type="PANTHER" id="PTHR23260">
    <property type="entry name" value="KERATIN ASSOCIATED PROTEIN 3-3-RELATED"/>
    <property type="match status" value="1"/>
</dbReference>
<dbReference type="PANTHER" id="PTHR23260:SF3">
    <property type="entry name" value="KERATIN-ASSOCIATED PROTEIN 3-1"/>
    <property type="match status" value="1"/>
</dbReference>
<dbReference type="Pfam" id="PF04579">
    <property type="entry name" value="Keratin_matx"/>
    <property type="match status" value="1"/>
</dbReference>
<feature type="chain" id="PRO_0000185163" description="Keratin-associated protein 3-1">
    <location>
        <begin position="1"/>
        <end position="98"/>
    </location>
</feature>
<feature type="repeat" description="1">
    <location>
        <begin position="3"/>
        <end position="7"/>
    </location>
</feature>
<feature type="repeat" description="2">
    <location>
        <begin position="8"/>
        <end position="12"/>
    </location>
</feature>
<feature type="repeat" description="3">
    <location>
        <begin position="47"/>
        <end position="51"/>
    </location>
</feature>
<feature type="repeat" description="4">
    <location>
        <begin position="55"/>
        <end position="59"/>
    </location>
</feature>
<feature type="region of interest" description="4 X 5 AA repeats of C-C-X(3)">
    <location>
        <begin position="3"/>
        <end position="59"/>
    </location>
</feature>